<feature type="transit peptide" description="Mitochondrion" evidence="2">
    <location>
        <begin position="1"/>
        <end position="50"/>
    </location>
</feature>
<feature type="chain" id="PRO_0000252441" description="Large ribosomal subunit protein uL1m">
    <location>
        <begin position="51"/>
        <end position="336"/>
    </location>
</feature>
<feature type="modified residue" description="Phosphoserine" evidence="4">
    <location>
        <position position="85"/>
    </location>
</feature>
<feature type="sequence conflict" description="In Ref. 2; BAB26866." evidence="3" ref="2">
    <original>K</original>
    <variation>E</variation>
    <location>
        <position position="56"/>
    </location>
</feature>
<feature type="sequence conflict" description="In Ref. 2; BAB26866." evidence="3" ref="2">
    <original>K</original>
    <variation>R</variation>
    <location>
        <position position="94"/>
    </location>
</feature>
<feature type="sequence conflict" description="In Ref. 2; BAB26866." evidence="3" ref="2">
    <original>D</original>
    <variation>G</variation>
    <location>
        <position position="118"/>
    </location>
</feature>
<feature type="sequence conflict" description="In Ref. 2; BAB26866." evidence="3" ref="2">
    <original>T</original>
    <variation>R</variation>
    <location>
        <position position="131"/>
    </location>
</feature>
<feature type="sequence conflict" description="In Ref. 2; BAB26866." evidence="3" ref="2">
    <original>K</original>
    <variation>R</variation>
    <location>
        <position position="140"/>
    </location>
</feature>
<feature type="sequence conflict" description="In Ref. 2; BAB26866." evidence="3" ref="2">
    <original>A</original>
    <variation>V</variation>
    <location>
        <position position="180"/>
    </location>
</feature>
<name>RM01_MOUSE</name>
<reference key="1">
    <citation type="journal article" date="2005" name="Science">
        <title>The transcriptional landscape of the mammalian genome.</title>
        <authorList>
            <person name="Carninci P."/>
            <person name="Kasukawa T."/>
            <person name="Katayama S."/>
            <person name="Gough J."/>
            <person name="Frith M.C."/>
            <person name="Maeda N."/>
            <person name="Oyama R."/>
            <person name="Ravasi T."/>
            <person name="Lenhard B."/>
            <person name="Wells C."/>
            <person name="Kodzius R."/>
            <person name="Shimokawa K."/>
            <person name="Bajic V.B."/>
            <person name="Brenner S.E."/>
            <person name="Batalov S."/>
            <person name="Forrest A.R."/>
            <person name="Zavolan M."/>
            <person name="Davis M.J."/>
            <person name="Wilming L.G."/>
            <person name="Aidinis V."/>
            <person name="Allen J.E."/>
            <person name="Ambesi-Impiombato A."/>
            <person name="Apweiler R."/>
            <person name="Aturaliya R.N."/>
            <person name="Bailey T.L."/>
            <person name="Bansal M."/>
            <person name="Baxter L."/>
            <person name="Beisel K.W."/>
            <person name="Bersano T."/>
            <person name="Bono H."/>
            <person name="Chalk A.M."/>
            <person name="Chiu K.P."/>
            <person name="Choudhary V."/>
            <person name="Christoffels A."/>
            <person name="Clutterbuck D.R."/>
            <person name="Crowe M.L."/>
            <person name="Dalla E."/>
            <person name="Dalrymple B.P."/>
            <person name="de Bono B."/>
            <person name="Della Gatta G."/>
            <person name="di Bernardo D."/>
            <person name="Down T."/>
            <person name="Engstrom P."/>
            <person name="Fagiolini M."/>
            <person name="Faulkner G."/>
            <person name="Fletcher C.F."/>
            <person name="Fukushima T."/>
            <person name="Furuno M."/>
            <person name="Futaki S."/>
            <person name="Gariboldi M."/>
            <person name="Georgii-Hemming P."/>
            <person name="Gingeras T.R."/>
            <person name="Gojobori T."/>
            <person name="Green R.E."/>
            <person name="Gustincich S."/>
            <person name="Harbers M."/>
            <person name="Hayashi Y."/>
            <person name="Hensch T.K."/>
            <person name="Hirokawa N."/>
            <person name="Hill D."/>
            <person name="Huminiecki L."/>
            <person name="Iacono M."/>
            <person name="Ikeo K."/>
            <person name="Iwama A."/>
            <person name="Ishikawa T."/>
            <person name="Jakt M."/>
            <person name="Kanapin A."/>
            <person name="Katoh M."/>
            <person name="Kawasawa Y."/>
            <person name="Kelso J."/>
            <person name="Kitamura H."/>
            <person name="Kitano H."/>
            <person name="Kollias G."/>
            <person name="Krishnan S.P."/>
            <person name="Kruger A."/>
            <person name="Kummerfeld S.K."/>
            <person name="Kurochkin I.V."/>
            <person name="Lareau L.F."/>
            <person name="Lazarevic D."/>
            <person name="Lipovich L."/>
            <person name="Liu J."/>
            <person name="Liuni S."/>
            <person name="McWilliam S."/>
            <person name="Madan Babu M."/>
            <person name="Madera M."/>
            <person name="Marchionni L."/>
            <person name="Matsuda H."/>
            <person name="Matsuzawa S."/>
            <person name="Miki H."/>
            <person name="Mignone F."/>
            <person name="Miyake S."/>
            <person name="Morris K."/>
            <person name="Mottagui-Tabar S."/>
            <person name="Mulder N."/>
            <person name="Nakano N."/>
            <person name="Nakauchi H."/>
            <person name="Ng P."/>
            <person name="Nilsson R."/>
            <person name="Nishiguchi S."/>
            <person name="Nishikawa S."/>
            <person name="Nori F."/>
            <person name="Ohara O."/>
            <person name="Okazaki Y."/>
            <person name="Orlando V."/>
            <person name="Pang K.C."/>
            <person name="Pavan W.J."/>
            <person name="Pavesi G."/>
            <person name="Pesole G."/>
            <person name="Petrovsky N."/>
            <person name="Piazza S."/>
            <person name="Reed J."/>
            <person name="Reid J.F."/>
            <person name="Ring B.Z."/>
            <person name="Ringwald M."/>
            <person name="Rost B."/>
            <person name="Ruan Y."/>
            <person name="Salzberg S.L."/>
            <person name="Sandelin A."/>
            <person name="Schneider C."/>
            <person name="Schoenbach C."/>
            <person name="Sekiguchi K."/>
            <person name="Semple C.A."/>
            <person name="Seno S."/>
            <person name="Sessa L."/>
            <person name="Sheng Y."/>
            <person name="Shibata Y."/>
            <person name="Shimada H."/>
            <person name="Shimada K."/>
            <person name="Silva D."/>
            <person name="Sinclair B."/>
            <person name="Sperling S."/>
            <person name="Stupka E."/>
            <person name="Sugiura K."/>
            <person name="Sultana R."/>
            <person name="Takenaka Y."/>
            <person name="Taki K."/>
            <person name="Tammoja K."/>
            <person name="Tan S.L."/>
            <person name="Tang S."/>
            <person name="Taylor M.S."/>
            <person name="Tegner J."/>
            <person name="Teichmann S.A."/>
            <person name="Ueda H.R."/>
            <person name="van Nimwegen E."/>
            <person name="Verardo R."/>
            <person name="Wei C.L."/>
            <person name="Yagi K."/>
            <person name="Yamanishi H."/>
            <person name="Zabarovsky E."/>
            <person name="Zhu S."/>
            <person name="Zimmer A."/>
            <person name="Hide W."/>
            <person name="Bult C."/>
            <person name="Grimmond S.M."/>
            <person name="Teasdale R.D."/>
            <person name="Liu E.T."/>
            <person name="Brusic V."/>
            <person name="Quackenbush J."/>
            <person name="Wahlestedt C."/>
            <person name="Mattick J.S."/>
            <person name="Hume D.A."/>
            <person name="Kai C."/>
            <person name="Sasaki D."/>
            <person name="Tomaru Y."/>
            <person name="Fukuda S."/>
            <person name="Kanamori-Katayama M."/>
            <person name="Suzuki M."/>
            <person name="Aoki J."/>
            <person name="Arakawa T."/>
            <person name="Iida J."/>
            <person name="Imamura K."/>
            <person name="Itoh M."/>
            <person name="Kato T."/>
            <person name="Kawaji H."/>
            <person name="Kawagashira N."/>
            <person name="Kawashima T."/>
            <person name="Kojima M."/>
            <person name="Kondo S."/>
            <person name="Konno H."/>
            <person name="Nakano K."/>
            <person name="Ninomiya N."/>
            <person name="Nishio T."/>
            <person name="Okada M."/>
            <person name="Plessy C."/>
            <person name="Shibata K."/>
            <person name="Shiraki T."/>
            <person name="Suzuki S."/>
            <person name="Tagami M."/>
            <person name="Waki K."/>
            <person name="Watahiki A."/>
            <person name="Okamura-Oho Y."/>
            <person name="Suzuki H."/>
            <person name="Kawai J."/>
            <person name="Hayashizaki Y."/>
        </authorList>
    </citation>
    <scope>NUCLEOTIDE SEQUENCE [LARGE SCALE MRNA]</scope>
    <source>
        <strain>C57BL/6J</strain>
        <tissue>Embryonic stem cell</tissue>
        <tissue>Heart</tissue>
    </source>
</reference>
<reference key="2">
    <citation type="journal article" date="2004" name="Genome Res.">
        <title>The status, quality, and expansion of the NIH full-length cDNA project: the Mammalian Gene Collection (MGC).</title>
        <authorList>
            <consortium name="The MGC Project Team"/>
        </authorList>
    </citation>
    <scope>NUCLEOTIDE SEQUENCE [LARGE SCALE MRNA]</scope>
    <source>
        <strain>C57BL/6J</strain>
        <tissue>Mammary gland</tissue>
        <tissue>Testis</tissue>
    </source>
</reference>
<reference key="3">
    <citation type="journal article" date="2001" name="J. Biol. Chem.">
        <title>Structural compensation for the deficit of rRNA with proteins in the mammalian mitochondrial ribosome. Systematic analysis of protein components of the large ribosomal subunit from mammalian mitochondria.</title>
        <authorList>
            <person name="Suzuki T."/>
            <person name="Terasaki M."/>
            <person name="Takemoto-Hori C."/>
            <person name="Hanada T."/>
            <person name="Ueda T."/>
            <person name="Wada A."/>
            <person name="Watanabe K."/>
        </authorList>
    </citation>
    <scope>NUCLEOTIDE SEQUENCE [MRNA] OF 11-336</scope>
</reference>
<reference key="4">
    <citation type="journal article" date="2006" name="Mol. Cell. Proteomics">
        <title>Comprehensive identification of phosphorylation sites in postsynaptic density preparations.</title>
        <authorList>
            <person name="Trinidad J.C."/>
            <person name="Specht C.G."/>
            <person name="Thalhammer A."/>
            <person name="Schoepfer R."/>
            <person name="Burlingame A.L."/>
        </authorList>
    </citation>
    <scope>IDENTIFICATION BY MASS SPECTROMETRY [LARGE SCALE ANALYSIS]</scope>
    <source>
        <tissue>Brain</tissue>
    </source>
</reference>
<reference key="5">
    <citation type="journal article" date="2010" name="Cell">
        <title>A tissue-specific atlas of mouse protein phosphorylation and expression.</title>
        <authorList>
            <person name="Huttlin E.L."/>
            <person name="Jedrychowski M.P."/>
            <person name="Elias J.E."/>
            <person name="Goswami T."/>
            <person name="Rad R."/>
            <person name="Beausoleil S.A."/>
            <person name="Villen J."/>
            <person name="Haas W."/>
            <person name="Sowa M.E."/>
            <person name="Gygi S.P."/>
        </authorList>
    </citation>
    <scope>PHOSPHORYLATION [LARGE SCALE ANALYSIS] AT SER-85</scope>
    <scope>IDENTIFICATION BY MASS SPECTROMETRY [LARGE SCALE ANALYSIS]</scope>
    <source>
        <tissue>Brain</tissue>
        <tissue>Brown adipose tissue</tissue>
        <tissue>Heart</tissue>
        <tissue>Kidney</tissue>
        <tissue>Liver</tissue>
        <tissue>Pancreas</tissue>
        <tissue>Testis</tissue>
    </source>
</reference>
<evidence type="ECO:0000250" key="1"/>
<evidence type="ECO:0000255" key="2"/>
<evidence type="ECO:0000305" key="3"/>
<evidence type="ECO:0007744" key="4">
    <source>
    </source>
</evidence>
<keyword id="KW-0496">Mitochondrion</keyword>
<keyword id="KW-0597">Phosphoprotein</keyword>
<keyword id="KW-1185">Reference proteome</keyword>
<keyword id="KW-0687">Ribonucleoprotein</keyword>
<keyword id="KW-0689">Ribosomal protein</keyword>
<keyword id="KW-0809">Transit peptide</keyword>
<organism>
    <name type="scientific">Mus musculus</name>
    <name type="common">Mouse</name>
    <dbReference type="NCBI Taxonomy" id="10090"/>
    <lineage>
        <taxon>Eukaryota</taxon>
        <taxon>Metazoa</taxon>
        <taxon>Chordata</taxon>
        <taxon>Craniata</taxon>
        <taxon>Vertebrata</taxon>
        <taxon>Euteleostomi</taxon>
        <taxon>Mammalia</taxon>
        <taxon>Eutheria</taxon>
        <taxon>Euarchontoglires</taxon>
        <taxon>Glires</taxon>
        <taxon>Rodentia</taxon>
        <taxon>Myomorpha</taxon>
        <taxon>Muroidea</taxon>
        <taxon>Muridae</taxon>
        <taxon>Murinae</taxon>
        <taxon>Mus</taxon>
        <taxon>Mus</taxon>
    </lineage>
</organism>
<protein>
    <recommendedName>
        <fullName evidence="3">Large ribosomal subunit protein uL1m</fullName>
    </recommendedName>
    <alternativeName>
        <fullName>39S ribosomal protein L1, mitochondrial</fullName>
        <shortName>L1mt</shortName>
        <shortName>MRP-L1</shortName>
    </alternativeName>
</protein>
<sequence length="336" mass="37597">MAAAVRCLRRVLIHHQRHCLCKMASQASLYPCSVNSLLHNRHFAAAAAAATKPARKIKKGAKEKTSDEKPVDDIEKIKSYTYMESDPEDDVYLKRLYPRRIYEVEKAIHLLKKFQVLDFTNPKQGVYLDLTLDMALGKKKTVEPFASVIALPHLFSSEVNKVAVFTANASEIKIAEENGAAFAGGTDLVKKIMDDEVVVDFYVAVPEIMGELNPLRKKLKKRFPKATRNSIGRDIPKMLELFKTAHEIMVDEERQNFLSTKIATLDMPSDQIAANLQAVINEVCKHRPLNLGPFVVRAFLRSSTSEGLLLKTDSLLPKEAKTTEAETEETQTAEAA</sequence>
<accession>Q99N96</accession>
<accession>Q3UQP5</accession>
<accession>Q8K351</accession>
<accession>Q9CWW4</accession>
<gene>
    <name type="primary">Mrpl1</name>
</gene>
<proteinExistence type="evidence at protein level"/>
<dbReference type="EMBL" id="AK010343">
    <property type="protein sequence ID" value="BAB26866.1"/>
    <property type="status" value="ALT_SEQ"/>
    <property type="molecule type" value="mRNA"/>
</dbReference>
<dbReference type="EMBL" id="AK142249">
    <property type="protein sequence ID" value="BAE24994.1"/>
    <property type="molecule type" value="mRNA"/>
</dbReference>
<dbReference type="EMBL" id="BC028774">
    <property type="protein sequence ID" value="AAH28774.1"/>
    <property type="molecule type" value="mRNA"/>
</dbReference>
<dbReference type="EMBL" id="BC061042">
    <property type="protein sequence ID" value="AAH61042.1"/>
    <property type="status" value="ALT_INIT"/>
    <property type="molecule type" value="mRNA"/>
</dbReference>
<dbReference type="EMBL" id="AB049632">
    <property type="protein sequence ID" value="BAB40837.1"/>
    <property type="status" value="ALT_INIT"/>
    <property type="molecule type" value="mRNA"/>
</dbReference>
<dbReference type="CCDS" id="CCDS19449.1"/>
<dbReference type="RefSeq" id="NP_444388.2">
    <property type="nucleotide sequence ID" value="NM_053158.3"/>
</dbReference>
<dbReference type="RefSeq" id="XP_006535355.1">
    <property type="nucleotide sequence ID" value="XM_006535292.2"/>
</dbReference>
<dbReference type="SMR" id="Q99N96"/>
<dbReference type="BioGRID" id="220433">
    <property type="interactions" value="27"/>
</dbReference>
<dbReference type="ComplexPortal" id="CPX-5302">
    <property type="entry name" value="39S mitochondrial large ribosomal subunit"/>
</dbReference>
<dbReference type="FunCoup" id="Q99N96">
    <property type="interactions" value="2015"/>
</dbReference>
<dbReference type="STRING" id="10090.ENSMUSP00000112977"/>
<dbReference type="iPTMnet" id="Q99N96"/>
<dbReference type="PhosphoSitePlus" id="Q99N96"/>
<dbReference type="jPOST" id="Q99N96"/>
<dbReference type="PaxDb" id="10090-ENSMUSP00000112451"/>
<dbReference type="PeptideAtlas" id="Q99N96"/>
<dbReference type="ProteomicsDB" id="299905"/>
<dbReference type="Pumba" id="Q99N96"/>
<dbReference type="Antibodypedia" id="24877">
    <property type="antibodies" value="209 antibodies from 27 providers"/>
</dbReference>
<dbReference type="DNASU" id="94061"/>
<dbReference type="Ensembl" id="ENSMUST00000117766.8">
    <property type="protein sequence ID" value="ENSMUSP00000112977.2"/>
    <property type="gene ID" value="ENSMUSG00000029486.15"/>
</dbReference>
<dbReference type="GeneID" id="94061"/>
<dbReference type="KEGG" id="mmu:94061"/>
<dbReference type="UCSC" id="uc008yfi.2">
    <property type="organism name" value="mouse"/>
</dbReference>
<dbReference type="AGR" id="MGI:2137202"/>
<dbReference type="CTD" id="65008"/>
<dbReference type="MGI" id="MGI:2137202">
    <property type="gene designation" value="Mrpl1"/>
</dbReference>
<dbReference type="VEuPathDB" id="HostDB:ENSMUSG00000029486"/>
<dbReference type="eggNOG" id="KOG1569">
    <property type="taxonomic scope" value="Eukaryota"/>
</dbReference>
<dbReference type="GeneTree" id="ENSGT00940000162168"/>
<dbReference type="HOGENOM" id="CLU_074129_0_0_1"/>
<dbReference type="InParanoid" id="Q99N96"/>
<dbReference type="OMA" id="NVGTLDM"/>
<dbReference type="OrthoDB" id="1747252at2759"/>
<dbReference type="PhylomeDB" id="Q99N96"/>
<dbReference type="Reactome" id="R-MMU-5389840">
    <property type="pathway name" value="Mitochondrial translation elongation"/>
</dbReference>
<dbReference type="Reactome" id="R-MMU-5419276">
    <property type="pathway name" value="Mitochondrial translation termination"/>
</dbReference>
<dbReference type="BioGRID-ORCS" id="94061">
    <property type="hits" value="3 hits in 76 CRISPR screens"/>
</dbReference>
<dbReference type="ChiTaRS" id="Mrpl1">
    <property type="organism name" value="mouse"/>
</dbReference>
<dbReference type="PRO" id="PR:Q99N96"/>
<dbReference type="Proteomes" id="UP000000589">
    <property type="component" value="Chromosome 5"/>
</dbReference>
<dbReference type="RNAct" id="Q99N96">
    <property type="molecule type" value="protein"/>
</dbReference>
<dbReference type="Bgee" id="ENSMUSG00000029486">
    <property type="expression patterns" value="Expressed in interventricular septum and 252 other cell types or tissues"/>
</dbReference>
<dbReference type="ExpressionAtlas" id="Q99N96">
    <property type="expression patterns" value="baseline and differential"/>
</dbReference>
<dbReference type="GO" id="GO:0005743">
    <property type="term" value="C:mitochondrial inner membrane"/>
    <property type="evidence" value="ECO:0000303"/>
    <property type="project" value="ComplexPortal"/>
</dbReference>
<dbReference type="GO" id="GO:0005762">
    <property type="term" value="C:mitochondrial large ribosomal subunit"/>
    <property type="evidence" value="ECO:0000266"/>
    <property type="project" value="MGI"/>
</dbReference>
<dbReference type="GO" id="GO:0005739">
    <property type="term" value="C:mitochondrion"/>
    <property type="evidence" value="ECO:0007005"/>
    <property type="project" value="MGI"/>
</dbReference>
<dbReference type="GO" id="GO:0003723">
    <property type="term" value="F:RNA binding"/>
    <property type="evidence" value="ECO:0007669"/>
    <property type="project" value="InterPro"/>
</dbReference>
<dbReference type="GO" id="GO:0003735">
    <property type="term" value="F:structural constituent of ribosome"/>
    <property type="evidence" value="ECO:0000266"/>
    <property type="project" value="MGI"/>
</dbReference>
<dbReference type="GO" id="GO:0032543">
    <property type="term" value="P:mitochondrial translation"/>
    <property type="evidence" value="ECO:0000303"/>
    <property type="project" value="ComplexPortal"/>
</dbReference>
<dbReference type="GO" id="GO:0006412">
    <property type="term" value="P:translation"/>
    <property type="evidence" value="ECO:0000266"/>
    <property type="project" value="MGI"/>
</dbReference>
<dbReference type="FunFam" id="3.40.50.790:FF:000003">
    <property type="entry name" value="39S ribosomal protein L1, mitochondrial"/>
    <property type="match status" value="1"/>
</dbReference>
<dbReference type="Gene3D" id="3.30.190.20">
    <property type="match status" value="1"/>
</dbReference>
<dbReference type="Gene3D" id="3.40.50.790">
    <property type="match status" value="1"/>
</dbReference>
<dbReference type="InterPro" id="IPR023674">
    <property type="entry name" value="Ribosomal_uL1-like"/>
</dbReference>
<dbReference type="InterPro" id="IPR028364">
    <property type="entry name" value="Ribosomal_uL1/biogenesis"/>
</dbReference>
<dbReference type="InterPro" id="IPR016095">
    <property type="entry name" value="Ribosomal_uL1_3-a/b-sand"/>
</dbReference>
<dbReference type="InterPro" id="IPR005879">
    <property type="entry name" value="Ribosomal_uL1_mit"/>
</dbReference>
<dbReference type="NCBIfam" id="TIGR01170">
    <property type="entry name" value="rplA_mito"/>
    <property type="match status" value="1"/>
</dbReference>
<dbReference type="PANTHER" id="PTHR36427">
    <property type="entry name" value="54S RIBOSOMAL PROTEIN L1, MITOCHONDRIAL"/>
    <property type="match status" value="1"/>
</dbReference>
<dbReference type="PANTHER" id="PTHR36427:SF3">
    <property type="entry name" value="LARGE RIBOSOMAL SUBUNIT PROTEIN UL1M"/>
    <property type="match status" value="1"/>
</dbReference>
<dbReference type="Pfam" id="PF00687">
    <property type="entry name" value="Ribosomal_L1"/>
    <property type="match status" value="1"/>
</dbReference>
<dbReference type="SUPFAM" id="SSF56808">
    <property type="entry name" value="Ribosomal protein L1"/>
    <property type="match status" value="1"/>
</dbReference>
<comment type="subcellular location">
    <subcellularLocation>
        <location evidence="1">Mitochondrion</location>
    </subcellularLocation>
</comment>
<comment type="similarity">
    <text evidence="3">Belongs to the universal ribosomal protein uL1 family.</text>
</comment>
<comment type="sequence caution" evidence="3">
    <conflict type="erroneous initiation">
        <sequence resource="EMBL-CDS" id="AAH61042"/>
    </conflict>
</comment>
<comment type="sequence caution" evidence="3">
    <conflict type="erroneous initiation">
        <sequence resource="EMBL-CDS" id="BAB26866"/>
    </conflict>
    <text>Truncated N-terminus.</text>
</comment>
<comment type="sequence caution" evidence="3">
    <conflict type="frameshift">
        <sequence resource="EMBL-CDS" id="BAB26866"/>
    </conflict>
</comment>
<comment type="sequence caution" evidence="3">
    <conflict type="erroneous initiation">
        <sequence resource="EMBL-CDS" id="BAB40837"/>
    </conflict>
</comment>